<reference key="1">
    <citation type="journal article" date="2014" name="Genome Announc.">
        <title>Complete Genome Sequence of the Extreme Thermophile Dictyoglomus thermophilum H-6-12.</title>
        <authorList>
            <person name="Coil D.A."/>
            <person name="Badger J.H."/>
            <person name="Forberger H.C."/>
            <person name="Riggs F."/>
            <person name="Madupu R."/>
            <person name="Fedorova N."/>
            <person name="Ward N."/>
            <person name="Robb F.T."/>
            <person name="Eisen J.A."/>
        </authorList>
    </citation>
    <scope>NUCLEOTIDE SEQUENCE [LARGE SCALE GENOMIC DNA]</scope>
    <source>
        <strain>ATCC 35947 / DSM 3960 / H-6-12</strain>
    </source>
</reference>
<evidence type="ECO:0000255" key="1">
    <source>
        <dbReference type="HAMAP-Rule" id="MF_00740"/>
    </source>
</evidence>
<protein>
    <recommendedName>
        <fullName evidence="1">Phosphopentomutase</fullName>
        <ecNumber evidence="1">5.4.2.7</ecNumber>
    </recommendedName>
    <alternativeName>
        <fullName evidence="1">Phosphodeoxyribomutase</fullName>
    </alternativeName>
</protein>
<gene>
    <name evidence="1" type="primary">deoB</name>
    <name type="ordered locus">DICTH_1362</name>
</gene>
<name>DEOB_DICT6</name>
<keyword id="KW-0963">Cytoplasm</keyword>
<keyword id="KW-0413">Isomerase</keyword>
<keyword id="KW-0464">Manganese</keyword>
<keyword id="KW-0479">Metal-binding</keyword>
<feature type="chain" id="PRO_1000133066" description="Phosphopentomutase">
    <location>
        <begin position="1"/>
        <end position="392"/>
    </location>
</feature>
<feature type="binding site" evidence="1">
    <location>
        <position position="10"/>
    </location>
    <ligand>
        <name>Mn(2+)</name>
        <dbReference type="ChEBI" id="CHEBI:29035"/>
        <label>1</label>
    </ligand>
</feature>
<feature type="binding site" evidence="1">
    <location>
        <position position="282"/>
    </location>
    <ligand>
        <name>Mn(2+)</name>
        <dbReference type="ChEBI" id="CHEBI:29035"/>
        <label>2</label>
    </ligand>
</feature>
<feature type="binding site" evidence="1">
    <location>
        <position position="287"/>
    </location>
    <ligand>
        <name>Mn(2+)</name>
        <dbReference type="ChEBI" id="CHEBI:29035"/>
        <label>2</label>
    </ligand>
</feature>
<feature type="binding site" evidence="1">
    <location>
        <position position="323"/>
    </location>
    <ligand>
        <name>Mn(2+)</name>
        <dbReference type="ChEBI" id="CHEBI:29035"/>
        <label>1</label>
    </ligand>
</feature>
<feature type="binding site" evidence="1">
    <location>
        <position position="324"/>
    </location>
    <ligand>
        <name>Mn(2+)</name>
        <dbReference type="ChEBI" id="CHEBI:29035"/>
        <label>1</label>
    </ligand>
</feature>
<feature type="binding site" evidence="1">
    <location>
        <position position="335"/>
    </location>
    <ligand>
        <name>Mn(2+)</name>
        <dbReference type="ChEBI" id="CHEBI:29035"/>
        <label>2</label>
    </ligand>
</feature>
<dbReference type="EC" id="5.4.2.7" evidence="1"/>
<dbReference type="EMBL" id="CP001146">
    <property type="protein sequence ID" value="ACI20067.1"/>
    <property type="molecule type" value="Genomic_DNA"/>
</dbReference>
<dbReference type="RefSeq" id="WP_012548699.1">
    <property type="nucleotide sequence ID" value="NC_011297.1"/>
</dbReference>
<dbReference type="SMR" id="B5YF73"/>
<dbReference type="STRING" id="309799.DICTH_1362"/>
<dbReference type="PaxDb" id="309799-DICTH_1362"/>
<dbReference type="KEGG" id="dth:DICTH_1362"/>
<dbReference type="eggNOG" id="COG1015">
    <property type="taxonomic scope" value="Bacteria"/>
</dbReference>
<dbReference type="HOGENOM" id="CLU_053861_0_0_0"/>
<dbReference type="OrthoDB" id="9769930at2"/>
<dbReference type="UniPathway" id="UPA00002">
    <property type="reaction ID" value="UER00467"/>
</dbReference>
<dbReference type="Proteomes" id="UP000001733">
    <property type="component" value="Chromosome"/>
</dbReference>
<dbReference type="GO" id="GO:0005829">
    <property type="term" value="C:cytosol"/>
    <property type="evidence" value="ECO:0007669"/>
    <property type="project" value="TreeGrafter"/>
</dbReference>
<dbReference type="GO" id="GO:0000287">
    <property type="term" value="F:magnesium ion binding"/>
    <property type="evidence" value="ECO:0007669"/>
    <property type="project" value="InterPro"/>
</dbReference>
<dbReference type="GO" id="GO:0030145">
    <property type="term" value="F:manganese ion binding"/>
    <property type="evidence" value="ECO:0007669"/>
    <property type="project" value="UniProtKB-UniRule"/>
</dbReference>
<dbReference type="GO" id="GO:0008973">
    <property type="term" value="F:phosphopentomutase activity"/>
    <property type="evidence" value="ECO:0007669"/>
    <property type="project" value="UniProtKB-UniRule"/>
</dbReference>
<dbReference type="GO" id="GO:0006018">
    <property type="term" value="P:2-deoxyribose 1-phosphate catabolic process"/>
    <property type="evidence" value="ECO:0007669"/>
    <property type="project" value="UniProtKB-UniRule"/>
</dbReference>
<dbReference type="GO" id="GO:0006015">
    <property type="term" value="P:5-phosphoribose 1-diphosphate biosynthetic process"/>
    <property type="evidence" value="ECO:0007669"/>
    <property type="project" value="UniProtKB-UniPathway"/>
</dbReference>
<dbReference type="GO" id="GO:0043094">
    <property type="term" value="P:metabolic compound salvage"/>
    <property type="evidence" value="ECO:0007669"/>
    <property type="project" value="InterPro"/>
</dbReference>
<dbReference type="GO" id="GO:0009117">
    <property type="term" value="P:nucleotide metabolic process"/>
    <property type="evidence" value="ECO:0007669"/>
    <property type="project" value="InterPro"/>
</dbReference>
<dbReference type="CDD" id="cd16009">
    <property type="entry name" value="PPM"/>
    <property type="match status" value="1"/>
</dbReference>
<dbReference type="FunFam" id="3.30.70.1250:FF:000001">
    <property type="entry name" value="Phosphopentomutase"/>
    <property type="match status" value="1"/>
</dbReference>
<dbReference type="Gene3D" id="3.40.720.10">
    <property type="entry name" value="Alkaline Phosphatase, subunit A"/>
    <property type="match status" value="1"/>
</dbReference>
<dbReference type="Gene3D" id="3.30.70.1250">
    <property type="entry name" value="Phosphopentomutase"/>
    <property type="match status" value="1"/>
</dbReference>
<dbReference type="HAMAP" id="MF_00740">
    <property type="entry name" value="Phosphopentomut"/>
    <property type="match status" value="1"/>
</dbReference>
<dbReference type="InterPro" id="IPR017850">
    <property type="entry name" value="Alkaline_phosphatase_core_sf"/>
</dbReference>
<dbReference type="InterPro" id="IPR010045">
    <property type="entry name" value="DeoB"/>
</dbReference>
<dbReference type="InterPro" id="IPR006124">
    <property type="entry name" value="Metalloenzyme"/>
</dbReference>
<dbReference type="InterPro" id="IPR024052">
    <property type="entry name" value="Phosphopentomutase_DeoB_cap_sf"/>
</dbReference>
<dbReference type="NCBIfam" id="TIGR01696">
    <property type="entry name" value="deoB"/>
    <property type="match status" value="1"/>
</dbReference>
<dbReference type="NCBIfam" id="NF003766">
    <property type="entry name" value="PRK05362.1"/>
    <property type="match status" value="1"/>
</dbReference>
<dbReference type="PANTHER" id="PTHR21110">
    <property type="entry name" value="PHOSPHOPENTOMUTASE"/>
    <property type="match status" value="1"/>
</dbReference>
<dbReference type="PANTHER" id="PTHR21110:SF0">
    <property type="entry name" value="PHOSPHOPENTOMUTASE"/>
    <property type="match status" value="1"/>
</dbReference>
<dbReference type="Pfam" id="PF01676">
    <property type="entry name" value="Metalloenzyme"/>
    <property type="match status" value="1"/>
</dbReference>
<dbReference type="PIRSF" id="PIRSF001491">
    <property type="entry name" value="Ppentomutase"/>
    <property type="match status" value="1"/>
</dbReference>
<dbReference type="SUPFAM" id="SSF53649">
    <property type="entry name" value="Alkaline phosphatase-like"/>
    <property type="match status" value="1"/>
</dbReference>
<dbReference type="SUPFAM" id="SSF143856">
    <property type="entry name" value="DeoB insert domain-like"/>
    <property type="match status" value="1"/>
</dbReference>
<sequence>MKRAILIVLDGVGIGELPDAAKYNDEGSNTLVNTAKALGGLSLPNMGKMGLSNIEEIPGTPKEDNPIAFYGKMAEASPGKDSTTGHWEIAGLILDRPFPVYPNGFPKEVIEAFEKAIGRKVIGNKPASGTEIIKELGEYHMKTGYPIVYTSADSVFQIAAHEEVIPVEELYRMCEIARNILQGEHAVARVIARPFTGSPGNFYRTPRRKDFSLPPFKATLLDYLKENNYDVIGVGKIEDLFAGRGLTLSLHQDNNSEGIKNIFEAWNKLREGLIFVNLVDFDMLYGHRNDPEGMGKALKDFDDALPDIMKLLSDFDLLIITADHGNDPTTPSTDHSREYVPLLIYSPNFKRTFPLGIRSTFSDLGKTLADFFNVKNDLHGESFLSTIEEGWK</sequence>
<proteinExistence type="inferred from homology"/>
<accession>B5YF73</accession>
<organism>
    <name type="scientific">Dictyoglomus thermophilum (strain ATCC 35947 / DSM 3960 / H-6-12)</name>
    <dbReference type="NCBI Taxonomy" id="309799"/>
    <lineage>
        <taxon>Bacteria</taxon>
        <taxon>Pseudomonadati</taxon>
        <taxon>Dictyoglomota</taxon>
        <taxon>Dictyoglomia</taxon>
        <taxon>Dictyoglomales</taxon>
        <taxon>Dictyoglomaceae</taxon>
        <taxon>Dictyoglomus</taxon>
    </lineage>
</organism>
<comment type="function">
    <text evidence="1">Isomerase that catalyzes the conversion of deoxy-ribose 1-phosphate (dRib-1-P) and ribose 1-phosphate (Rib-1-P) to deoxy-ribose 5-phosphate (dRib-5-P) and ribose 5-phosphate (Rib-5-P), respectively.</text>
</comment>
<comment type="catalytic activity">
    <reaction evidence="1">
        <text>2-deoxy-alpha-D-ribose 1-phosphate = 2-deoxy-D-ribose 5-phosphate</text>
        <dbReference type="Rhea" id="RHEA:27658"/>
        <dbReference type="ChEBI" id="CHEBI:57259"/>
        <dbReference type="ChEBI" id="CHEBI:62877"/>
        <dbReference type="EC" id="5.4.2.7"/>
    </reaction>
</comment>
<comment type="catalytic activity">
    <reaction evidence="1">
        <text>alpha-D-ribose 1-phosphate = D-ribose 5-phosphate</text>
        <dbReference type="Rhea" id="RHEA:18793"/>
        <dbReference type="ChEBI" id="CHEBI:57720"/>
        <dbReference type="ChEBI" id="CHEBI:78346"/>
        <dbReference type="EC" id="5.4.2.7"/>
    </reaction>
</comment>
<comment type="cofactor">
    <cofactor evidence="1">
        <name>Mn(2+)</name>
        <dbReference type="ChEBI" id="CHEBI:29035"/>
    </cofactor>
    <text evidence="1">Binds 2 manganese ions.</text>
</comment>
<comment type="pathway">
    <text evidence="1">Carbohydrate degradation; 2-deoxy-D-ribose 1-phosphate degradation; D-glyceraldehyde 3-phosphate and acetaldehyde from 2-deoxy-alpha-D-ribose 1-phosphate: step 1/2.</text>
</comment>
<comment type="subcellular location">
    <subcellularLocation>
        <location evidence="1">Cytoplasm</location>
    </subcellularLocation>
</comment>
<comment type="similarity">
    <text evidence="1">Belongs to the phosphopentomutase family.</text>
</comment>